<organism>
    <name type="scientific">Xanthomonas oryzae pv. oryzae (strain MAFF 311018)</name>
    <dbReference type="NCBI Taxonomy" id="342109"/>
    <lineage>
        <taxon>Bacteria</taxon>
        <taxon>Pseudomonadati</taxon>
        <taxon>Pseudomonadota</taxon>
        <taxon>Gammaproteobacteria</taxon>
        <taxon>Lysobacterales</taxon>
        <taxon>Lysobacteraceae</taxon>
        <taxon>Xanthomonas</taxon>
    </lineage>
</organism>
<feature type="chain" id="PRO_0000253199" description="Putative membrane protein insertion efficiency factor">
    <location>
        <begin position="1"/>
        <end position="95"/>
    </location>
</feature>
<keyword id="KW-0997">Cell inner membrane</keyword>
<keyword id="KW-1003">Cell membrane</keyword>
<keyword id="KW-0472">Membrane</keyword>
<name>YIDD_XANOM</name>
<sequence>MQVAYHWQVISRLLIALLRFYKLFISPLLGPRCRFAPSCSEYAMTAIGRFGPLRGSWLAARRLGRCHPFHPGGFDPVPDAPASPSSSCSCKGPHP</sequence>
<comment type="function">
    <text evidence="1">Could be involved in insertion of integral membrane proteins into the membrane.</text>
</comment>
<comment type="subcellular location">
    <subcellularLocation>
        <location evidence="1">Cell inner membrane</location>
        <topology evidence="1">Peripheral membrane protein</topology>
        <orientation evidence="1">Cytoplasmic side</orientation>
    </subcellularLocation>
</comment>
<comment type="similarity">
    <text evidence="1">Belongs to the UPF0161 family.</text>
</comment>
<gene>
    <name type="ordered locus">XOO2530</name>
</gene>
<accession>Q2P2E2</accession>
<evidence type="ECO:0000255" key="1">
    <source>
        <dbReference type="HAMAP-Rule" id="MF_00386"/>
    </source>
</evidence>
<reference key="1">
    <citation type="journal article" date="2005" name="Jpn. Agric. Res. Q.">
        <title>Genome sequence of Xanthomonas oryzae pv. oryzae suggests contribution of large numbers of effector genes and insertion sequences to its race diversity.</title>
        <authorList>
            <person name="Ochiai H."/>
            <person name="Inoue Y."/>
            <person name="Takeya M."/>
            <person name="Sasaki A."/>
            <person name="Kaku H."/>
        </authorList>
    </citation>
    <scope>NUCLEOTIDE SEQUENCE [LARGE SCALE GENOMIC DNA]</scope>
    <source>
        <strain>MAFF 311018</strain>
    </source>
</reference>
<dbReference type="EMBL" id="AP008229">
    <property type="protein sequence ID" value="BAE69285.1"/>
    <property type="molecule type" value="Genomic_DNA"/>
</dbReference>
<dbReference type="KEGG" id="xom:XOO2530"/>
<dbReference type="HOGENOM" id="CLU_144811_2_2_6"/>
<dbReference type="GO" id="GO:0005886">
    <property type="term" value="C:plasma membrane"/>
    <property type="evidence" value="ECO:0007669"/>
    <property type="project" value="UniProtKB-SubCell"/>
</dbReference>
<dbReference type="HAMAP" id="MF_00386">
    <property type="entry name" value="UPF0161_YidD"/>
    <property type="match status" value="1"/>
</dbReference>
<dbReference type="InterPro" id="IPR002696">
    <property type="entry name" value="Membr_insert_effic_factor_YidD"/>
</dbReference>
<dbReference type="NCBIfam" id="TIGR00278">
    <property type="entry name" value="membrane protein insertion efficiency factor YidD"/>
    <property type="match status" value="1"/>
</dbReference>
<dbReference type="PANTHER" id="PTHR33383">
    <property type="entry name" value="MEMBRANE PROTEIN INSERTION EFFICIENCY FACTOR-RELATED"/>
    <property type="match status" value="1"/>
</dbReference>
<dbReference type="PANTHER" id="PTHR33383:SF1">
    <property type="entry name" value="MEMBRANE PROTEIN INSERTION EFFICIENCY FACTOR-RELATED"/>
    <property type="match status" value="1"/>
</dbReference>
<dbReference type="Pfam" id="PF01809">
    <property type="entry name" value="YidD"/>
    <property type="match status" value="1"/>
</dbReference>
<dbReference type="SMART" id="SM01234">
    <property type="entry name" value="Haemolytic"/>
    <property type="match status" value="1"/>
</dbReference>
<protein>
    <recommendedName>
        <fullName evidence="1">Putative membrane protein insertion efficiency factor</fullName>
    </recommendedName>
</protein>
<proteinExistence type="inferred from homology"/>